<reference key="1">
    <citation type="journal article" date="2010" name="Appl. Environ. Microbiol.">
        <title>The genome sequence of Psychrobacter arcticus 273-4, a psychroactive Siberian permafrost bacterium, reveals mechanisms for adaptation to low-temperature growth.</title>
        <authorList>
            <person name="Ayala-del-Rio H.L."/>
            <person name="Chain P.S."/>
            <person name="Grzymski J.J."/>
            <person name="Ponder M.A."/>
            <person name="Ivanova N."/>
            <person name="Bergholz P.W."/>
            <person name="Di Bartolo G."/>
            <person name="Hauser L."/>
            <person name="Land M."/>
            <person name="Bakermans C."/>
            <person name="Rodrigues D."/>
            <person name="Klappenbach J."/>
            <person name="Zarka D."/>
            <person name="Larimer F."/>
            <person name="Richardson P."/>
            <person name="Murray A."/>
            <person name="Thomashow M."/>
            <person name="Tiedje J.M."/>
        </authorList>
    </citation>
    <scope>NUCLEOTIDE SEQUENCE [LARGE SCALE GENOMIC DNA]</scope>
    <source>
        <strain>DSM 17307 / VKM B-2377 / 273-4</strain>
    </source>
</reference>
<sequence>MSLSTPLITDSVIQAAHWLKKGQLLAYPTESVWGIGCDPFNQQAVMQLLTIKQRPIEKGMIVVTDSPSRITVLLEGLDAVERQTVLDSWQTDSINGTAKQAHTWLLPISQKLLITIPSWITGAHDSVAVRVIDHPLVKQLCAQMVSASNPYGFVVSTSCNPAGQPPALSLSEAQRYFLRHHANSNECVGYLKGETLGYQLPSQIGDALTGQIIR</sequence>
<comment type="function">
    <text evidence="1">Required for the formation of a threonylcarbamoyl group on adenosine at position 37 (t(6)A37) in tRNAs that read codons beginning with adenine. Catalyzes the conversion of L-threonine, HCO(3)(-)/CO(2) and ATP to give threonylcarbamoyl-AMP (TC-AMP) as the acyladenylate intermediate, with the release of diphosphate.</text>
</comment>
<comment type="catalytic activity">
    <reaction evidence="1">
        <text>L-threonine + hydrogencarbonate + ATP = L-threonylcarbamoyladenylate + diphosphate + H2O</text>
        <dbReference type="Rhea" id="RHEA:36407"/>
        <dbReference type="ChEBI" id="CHEBI:15377"/>
        <dbReference type="ChEBI" id="CHEBI:17544"/>
        <dbReference type="ChEBI" id="CHEBI:30616"/>
        <dbReference type="ChEBI" id="CHEBI:33019"/>
        <dbReference type="ChEBI" id="CHEBI:57926"/>
        <dbReference type="ChEBI" id="CHEBI:73682"/>
        <dbReference type="EC" id="2.7.7.87"/>
    </reaction>
</comment>
<comment type="subcellular location">
    <subcellularLocation>
        <location evidence="1">Cytoplasm</location>
    </subcellularLocation>
</comment>
<comment type="similarity">
    <text evidence="1">Belongs to the SUA5 family. TsaC subfamily.</text>
</comment>
<gene>
    <name evidence="1" type="primary">tsaC</name>
    <name type="synonym">rimN</name>
    <name type="ordered locus">Psyc_2134</name>
</gene>
<protein>
    <recommendedName>
        <fullName evidence="1">Threonylcarbamoyl-AMP synthase</fullName>
        <shortName evidence="1">TC-AMP synthase</shortName>
        <ecNumber evidence="1">2.7.7.87</ecNumber>
    </recommendedName>
    <alternativeName>
        <fullName evidence="1">L-threonylcarbamoyladenylate synthase</fullName>
    </alternativeName>
    <alternativeName>
        <fullName evidence="1">t(6)A37 threonylcarbamoyladenosine biosynthesis protein TsaC</fullName>
    </alternativeName>
    <alternativeName>
        <fullName evidence="1">tRNA threonylcarbamoyladenosine biosynthesis protein TsaC</fullName>
    </alternativeName>
</protein>
<name>TSAC_PSYA2</name>
<feature type="chain" id="PRO_0000352963" description="Threonylcarbamoyl-AMP synthase">
    <location>
        <begin position="1"/>
        <end position="214"/>
    </location>
</feature>
<feature type="domain" description="YrdC-like" evidence="1">
    <location>
        <begin position="9"/>
        <end position="214"/>
    </location>
</feature>
<accession>Q4FPS7</accession>
<proteinExistence type="inferred from homology"/>
<keyword id="KW-0067">ATP-binding</keyword>
<keyword id="KW-0963">Cytoplasm</keyword>
<keyword id="KW-0547">Nucleotide-binding</keyword>
<keyword id="KW-0548">Nucleotidyltransferase</keyword>
<keyword id="KW-1185">Reference proteome</keyword>
<keyword id="KW-0808">Transferase</keyword>
<keyword id="KW-0819">tRNA processing</keyword>
<dbReference type="EC" id="2.7.7.87" evidence="1"/>
<dbReference type="EMBL" id="CP000082">
    <property type="protein sequence ID" value="AAZ19981.1"/>
    <property type="molecule type" value="Genomic_DNA"/>
</dbReference>
<dbReference type="RefSeq" id="WP_011281387.1">
    <property type="nucleotide sequence ID" value="NC_007204.1"/>
</dbReference>
<dbReference type="SMR" id="Q4FPS7"/>
<dbReference type="STRING" id="259536.Psyc_2134"/>
<dbReference type="KEGG" id="par:Psyc_2134"/>
<dbReference type="eggNOG" id="COG0009">
    <property type="taxonomic scope" value="Bacteria"/>
</dbReference>
<dbReference type="HOGENOM" id="CLU_031397_6_0_6"/>
<dbReference type="OrthoDB" id="9814580at2"/>
<dbReference type="Proteomes" id="UP000000546">
    <property type="component" value="Chromosome"/>
</dbReference>
<dbReference type="GO" id="GO:0005737">
    <property type="term" value="C:cytoplasm"/>
    <property type="evidence" value="ECO:0007669"/>
    <property type="project" value="UniProtKB-SubCell"/>
</dbReference>
<dbReference type="GO" id="GO:0005524">
    <property type="term" value="F:ATP binding"/>
    <property type="evidence" value="ECO:0007669"/>
    <property type="project" value="UniProtKB-UniRule"/>
</dbReference>
<dbReference type="GO" id="GO:0003725">
    <property type="term" value="F:double-stranded RNA binding"/>
    <property type="evidence" value="ECO:0007669"/>
    <property type="project" value="InterPro"/>
</dbReference>
<dbReference type="GO" id="GO:0061710">
    <property type="term" value="F:L-threonylcarbamoyladenylate synthase"/>
    <property type="evidence" value="ECO:0007669"/>
    <property type="project" value="UniProtKB-EC"/>
</dbReference>
<dbReference type="GO" id="GO:0000049">
    <property type="term" value="F:tRNA binding"/>
    <property type="evidence" value="ECO:0007669"/>
    <property type="project" value="TreeGrafter"/>
</dbReference>
<dbReference type="GO" id="GO:0006450">
    <property type="term" value="P:regulation of translational fidelity"/>
    <property type="evidence" value="ECO:0007669"/>
    <property type="project" value="TreeGrafter"/>
</dbReference>
<dbReference type="GO" id="GO:0002949">
    <property type="term" value="P:tRNA threonylcarbamoyladenosine modification"/>
    <property type="evidence" value="ECO:0007669"/>
    <property type="project" value="UniProtKB-UniRule"/>
</dbReference>
<dbReference type="Gene3D" id="3.90.870.10">
    <property type="entry name" value="DHBP synthase"/>
    <property type="match status" value="1"/>
</dbReference>
<dbReference type="HAMAP" id="MF_01852">
    <property type="entry name" value="TsaC"/>
    <property type="match status" value="1"/>
</dbReference>
<dbReference type="InterPro" id="IPR017945">
    <property type="entry name" value="DHBP_synth_RibB-like_a/b_dom"/>
</dbReference>
<dbReference type="InterPro" id="IPR006070">
    <property type="entry name" value="Sua5-like_dom"/>
</dbReference>
<dbReference type="InterPro" id="IPR023535">
    <property type="entry name" value="TC-AMP_synthase"/>
</dbReference>
<dbReference type="InterPro" id="IPR050156">
    <property type="entry name" value="TC-AMP_synthase_SUA5"/>
</dbReference>
<dbReference type="PANTHER" id="PTHR17490">
    <property type="entry name" value="SUA5"/>
    <property type="match status" value="1"/>
</dbReference>
<dbReference type="PANTHER" id="PTHR17490:SF18">
    <property type="entry name" value="THREONYLCARBAMOYL-AMP SYNTHASE"/>
    <property type="match status" value="1"/>
</dbReference>
<dbReference type="Pfam" id="PF01300">
    <property type="entry name" value="Sua5_yciO_yrdC"/>
    <property type="match status" value="1"/>
</dbReference>
<dbReference type="SUPFAM" id="SSF55821">
    <property type="entry name" value="YrdC/RibB"/>
    <property type="match status" value="1"/>
</dbReference>
<dbReference type="PROSITE" id="PS51163">
    <property type="entry name" value="YRDC"/>
    <property type="match status" value="1"/>
</dbReference>
<organism>
    <name type="scientific">Psychrobacter arcticus (strain DSM 17307 / VKM B-2377 / 273-4)</name>
    <dbReference type="NCBI Taxonomy" id="259536"/>
    <lineage>
        <taxon>Bacteria</taxon>
        <taxon>Pseudomonadati</taxon>
        <taxon>Pseudomonadota</taxon>
        <taxon>Gammaproteobacteria</taxon>
        <taxon>Moraxellales</taxon>
        <taxon>Moraxellaceae</taxon>
        <taxon>Psychrobacter</taxon>
    </lineage>
</organism>
<evidence type="ECO:0000255" key="1">
    <source>
        <dbReference type="HAMAP-Rule" id="MF_01852"/>
    </source>
</evidence>